<reference key="1">
    <citation type="journal article" date="2007" name="Genome Res.">
        <title>Genome sequence of a proteolytic (Group I) Clostridium botulinum strain Hall A and comparative analysis of the clostridial genomes.</title>
        <authorList>
            <person name="Sebaihia M."/>
            <person name="Peck M.W."/>
            <person name="Minton N.P."/>
            <person name="Thomson N.R."/>
            <person name="Holden M.T.G."/>
            <person name="Mitchell W.J."/>
            <person name="Carter A.T."/>
            <person name="Bentley S.D."/>
            <person name="Mason D.R."/>
            <person name="Crossman L."/>
            <person name="Paul C.J."/>
            <person name="Ivens A."/>
            <person name="Wells-Bennik M.H.J."/>
            <person name="Davis I.J."/>
            <person name="Cerdeno-Tarraga A.M."/>
            <person name="Churcher C."/>
            <person name="Quail M.A."/>
            <person name="Chillingworth T."/>
            <person name="Feltwell T."/>
            <person name="Fraser A."/>
            <person name="Goodhead I."/>
            <person name="Hance Z."/>
            <person name="Jagels K."/>
            <person name="Larke N."/>
            <person name="Maddison M."/>
            <person name="Moule S."/>
            <person name="Mungall K."/>
            <person name="Norbertczak H."/>
            <person name="Rabbinowitsch E."/>
            <person name="Sanders M."/>
            <person name="Simmonds M."/>
            <person name="White B."/>
            <person name="Whithead S."/>
            <person name="Parkhill J."/>
        </authorList>
    </citation>
    <scope>NUCLEOTIDE SEQUENCE [LARGE SCALE GENOMIC DNA]</scope>
    <source>
        <strain>Hall / ATCC 3502 / NCTC 13319 / Type A</strain>
    </source>
</reference>
<reference key="2">
    <citation type="journal article" date="2007" name="PLoS ONE">
        <title>Analysis of the neurotoxin complex genes in Clostridium botulinum A1-A4 and B1 strains: BoNT/A3, /Ba4 and /B1 clusters are located within plasmids.</title>
        <authorList>
            <person name="Smith T.J."/>
            <person name="Hill K.K."/>
            <person name="Foley B.T."/>
            <person name="Detter J.C."/>
            <person name="Munk A.C."/>
            <person name="Bruce D.C."/>
            <person name="Doggett N.A."/>
            <person name="Smith L.A."/>
            <person name="Marks J.D."/>
            <person name="Xie G."/>
            <person name="Brettin T.S."/>
        </authorList>
    </citation>
    <scope>NUCLEOTIDE SEQUENCE [LARGE SCALE GENOMIC DNA]</scope>
    <source>
        <strain>Hall / ATCC 3502 / NCTC 13319 / Type A</strain>
    </source>
</reference>
<accession>A5I7K8</accession>
<accession>A7G8U0</accession>
<sequence length="397" mass="43483">MAKAKFERSKPHVNIGTIGHVDHGKTTLTAAITTVLAQKGGASATKYDEIDKAPEEKERGITINTSHVEYETANRHYAHVDCPGHADYVKNMITGAAQMDGAILVVSAADGPMPQTREHILLASRVGVQYIVVFLNKADQVDDPELIELVEMEVRELLNEYGFPGDDTPIVVGSALEVLENQDNAEKTKCIDELMEAIDSYIPTPERATDQPFLMPVEDVFTITGRGTVATGRVERGVLHTGDEVELIGMKQEVSKTVCTGIEMFRKILDEAMAGDNIGALLRGIQRDEIQRGQVLAKPGSVTPHKKFVGQVYVLKKEEGGRHTPFFNGYRPQFYFRTTDVTGSINLPEGVEMVMPGDHIDMAVELITPVAMHENLRFAIREGGRTVGSGVVTTISE</sequence>
<feature type="chain" id="PRO_0000337357" description="Elongation factor Tu">
    <location>
        <begin position="1"/>
        <end position="397"/>
    </location>
</feature>
<feature type="domain" description="tr-type G">
    <location>
        <begin position="10"/>
        <end position="206"/>
    </location>
</feature>
<feature type="region of interest" description="G1" evidence="1">
    <location>
        <begin position="19"/>
        <end position="26"/>
    </location>
</feature>
<feature type="region of interest" description="G2" evidence="1">
    <location>
        <begin position="60"/>
        <end position="64"/>
    </location>
</feature>
<feature type="region of interest" description="G3" evidence="1">
    <location>
        <begin position="81"/>
        <end position="84"/>
    </location>
</feature>
<feature type="region of interest" description="G4" evidence="1">
    <location>
        <begin position="136"/>
        <end position="139"/>
    </location>
</feature>
<feature type="region of interest" description="G5" evidence="1">
    <location>
        <begin position="174"/>
        <end position="176"/>
    </location>
</feature>
<feature type="binding site" evidence="2">
    <location>
        <begin position="19"/>
        <end position="26"/>
    </location>
    <ligand>
        <name>GTP</name>
        <dbReference type="ChEBI" id="CHEBI:37565"/>
    </ligand>
</feature>
<feature type="binding site" evidence="2">
    <location>
        <position position="26"/>
    </location>
    <ligand>
        <name>Mg(2+)</name>
        <dbReference type="ChEBI" id="CHEBI:18420"/>
    </ligand>
</feature>
<feature type="binding site" evidence="2">
    <location>
        <begin position="81"/>
        <end position="85"/>
    </location>
    <ligand>
        <name>GTP</name>
        <dbReference type="ChEBI" id="CHEBI:37565"/>
    </ligand>
</feature>
<feature type="binding site" evidence="2">
    <location>
        <begin position="136"/>
        <end position="139"/>
    </location>
    <ligand>
        <name>GTP</name>
        <dbReference type="ChEBI" id="CHEBI:37565"/>
    </ligand>
</feature>
<comment type="function">
    <text evidence="2">GTP hydrolase that promotes the GTP-dependent binding of aminoacyl-tRNA to the A-site of ribosomes during protein biosynthesis.</text>
</comment>
<comment type="catalytic activity">
    <reaction evidence="2">
        <text>GTP + H2O = GDP + phosphate + H(+)</text>
        <dbReference type="Rhea" id="RHEA:19669"/>
        <dbReference type="ChEBI" id="CHEBI:15377"/>
        <dbReference type="ChEBI" id="CHEBI:15378"/>
        <dbReference type="ChEBI" id="CHEBI:37565"/>
        <dbReference type="ChEBI" id="CHEBI:43474"/>
        <dbReference type="ChEBI" id="CHEBI:58189"/>
        <dbReference type="EC" id="3.6.5.3"/>
    </reaction>
    <physiologicalReaction direction="left-to-right" evidence="2">
        <dbReference type="Rhea" id="RHEA:19670"/>
    </physiologicalReaction>
</comment>
<comment type="subunit">
    <text evidence="2">Monomer.</text>
</comment>
<comment type="subcellular location">
    <subcellularLocation>
        <location evidence="2">Cytoplasm</location>
    </subcellularLocation>
</comment>
<comment type="similarity">
    <text evidence="2">Belongs to the TRAFAC class translation factor GTPase superfamily. Classic translation factor GTPase family. EF-Tu/EF-1A subfamily.</text>
</comment>
<gene>
    <name evidence="2" type="primary">tuf1</name>
    <name type="synonym">tufA</name>
    <name type="ordered locus">CBO3482</name>
    <name type="ordered locus">CLC_3427</name>
</gene>
<gene>
    <name evidence="2" type="primary">tuf2</name>
    <name type="synonym">tufB</name>
    <name type="ordered locus">CBO3496</name>
    <name type="ordered locus">CLC_3441</name>
</gene>
<name>EFTU_CLOBH</name>
<evidence type="ECO:0000250" key="1"/>
<evidence type="ECO:0000255" key="2">
    <source>
        <dbReference type="HAMAP-Rule" id="MF_00118"/>
    </source>
</evidence>
<keyword id="KW-0963">Cytoplasm</keyword>
<keyword id="KW-0251">Elongation factor</keyword>
<keyword id="KW-0342">GTP-binding</keyword>
<keyword id="KW-0378">Hydrolase</keyword>
<keyword id="KW-0460">Magnesium</keyword>
<keyword id="KW-0479">Metal-binding</keyword>
<keyword id="KW-0547">Nucleotide-binding</keyword>
<keyword id="KW-0648">Protein biosynthesis</keyword>
<keyword id="KW-1185">Reference proteome</keyword>
<dbReference type="EC" id="3.6.5.3" evidence="2"/>
<dbReference type="EMBL" id="CP000727">
    <property type="protein sequence ID" value="ABS37793.1"/>
    <property type="molecule type" value="Genomic_DNA"/>
</dbReference>
<dbReference type="EMBL" id="CP000727">
    <property type="protein sequence ID" value="ABS39226.1"/>
    <property type="molecule type" value="Genomic_DNA"/>
</dbReference>
<dbReference type="EMBL" id="AM412317">
    <property type="protein sequence ID" value="CAL85043.1"/>
    <property type="molecule type" value="Genomic_DNA"/>
</dbReference>
<dbReference type="EMBL" id="AM412317">
    <property type="protein sequence ID" value="CAL85057.1"/>
    <property type="molecule type" value="Genomic_DNA"/>
</dbReference>
<dbReference type="RefSeq" id="YP_001255964.1">
    <property type="nucleotide sequence ID" value="NC_009495.1"/>
</dbReference>
<dbReference type="RefSeq" id="YP_001255978.1">
    <property type="nucleotide sequence ID" value="NC_009495.1"/>
</dbReference>
<dbReference type="RefSeq" id="YP_001389205.1">
    <property type="nucleotide sequence ID" value="NC_009698.1"/>
</dbReference>
<dbReference type="RefSeq" id="YP_001389219.1">
    <property type="nucleotide sequence ID" value="NC_009698.1"/>
</dbReference>
<dbReference type="SMR" id="A5I7K8"/>
<dbReference type="GeneID" id="5187740"/>
<dbReference type="KEGG" id="cbh:CLC_3427"/>
<dbReference type="KEGG" id="cbh:CLC_3441"/>
<dbReference type="KEGG" id="cbo:CBO3482"/>
<dbReference type="KEGG" id="cbo:CBO3496"/>
<dbReference type="PATRIC" id="fig|413999.7.peg.3459"/>
<dbReference type="HOGENOM" id="CLU_007265_0_0_9"/>
<dbReference type="Proteomes" id="UP000001986">
    <property type="component" value="Chromosome"/>
</dbReference>
<dbReference type="GO" id="GO:0005737">
    <property type="term" value="C:cytoplasm"/>
    <property type="evidence" value="ECO:0007669"/>
    <property type="project" value="UniProtKB-SubCell"/>
</dbReference>
<dbReference type="GO" id="GO:0005525">
    <property type="term" value="F:GTP binding"/>
    <property type="evidence" value="ECO:0007669"/>
    <property type="project" value="UniProtKB-UniRule"/>
</dbReference>
<dbReference type="GO" id="GO:0003924">
    <property type="term" value="F:GTPase activity"/>
    <property type="evidence" value="ECO:0007669"/>
    <property type="project" value="InterPro"/>
</dbReference>
<dbReference type="GO" id="GO:0003746">
    <property type="term" value="F:translation elongation factor activity"/>
    <property type="evidence" value="ECO:0007669"/>
    <property type="project" value="UniProtKB-UniRule"/>
</dbReference>
<dbReference type="GO" id="GO:0006790">
    <property type="term" value="P:sulfur compound metabolic process"/>
    <property type="evidence" value="ECO:0000318"/>
    <property type="project" value="GO_Central"/>
</dbReference>
<dbReference type="CDD" id="cd01884">
    <property type="entry name" value="EF_Tu"/>
    <property type="match status" value="1"/>
</dbReference>
<dbReference type="CDD" id="cd03697">
    <property type="entry name" value="EFTU_II"/>
    <property type="match status" value="1"/>
</dbReference>
<dbReference type="CDD" id="cd03707">
    <property type="entry name" value="EFTU_III"/>
    <property type="match status" value="1"/>
</dbReference>
<dbReference type="FunFam" id="2.40.30.10:FF:000001">
    <property type="entry name" value="Elongation factor Tu"/>
    <property type="match status" value="1"/>
</dbReference>
<dbReference type="FunFam" id="3.40.50.300:FF:000003">
    <property type="entry name" value="Elongation factor Tu"/>
    <property type="match status" value="1"/>
</dbReference>
<dbReference type="Gene3D" id="3.40.50.300">
    <property type="entry name" value="P-loop containing nucleotide triphosphate hydrolases"/>
    <property type="match status" value="1"/>
</dbReference>
<dbReference type="Gene3D" id="2.40.30.10">
    <property type="entry name" value="Translation factors"/>
    <property type="match status" value="2"/>
</dbReference>
<dbReference type="HAMAP" id="MF_00118_B">
    <property type="entry name" value="EF_Tu_B"/>
    <property type="match status" value="1"/>
</dbReference>
<dbReference type="InterPro" id="IPR041709">
    <property type="entry name" value="EF-Tu_GTP-bd"/>
</dbReference>
<dbReference type="InterPro" id="IPR050055">
    <property type="entry name" value="EF-Tu_GTPase"/>
</dbReference>
<dbReference type="InterPro" id="IPR004161">
    <property type="entry name" value="EFTu-like_2"/>
</dbReference>
<dbReference type="InterPro" id="IPR033720">
    <property type="entry name" value="EFTU_2"/>
</dbReference>
<dbReference type="InterPro" id="IPR031157">
    <property type="entry name" value="G_TR_CS"/>
</dbReference>
<dbReference type="InterPro" id="IPR027417">
    <property type="entry name" value="P-loop_NTPase"/>
</dbReference>
<dbReference type="InterPro" id="IPR005225">
    <property type="entry name" value="Small_GTP-bd"/>
</dbReference>
<dbReference type="InterPro" id="IPR000795">
    <property type="entry name" value="T_Tr_GTP-bd_dom"/>
</dbReference>
<dbReference type="InterPro" id="IPR009000">
    <property type="entry name" value="Transl_B-barrel_sf"/>
</dbReference>
<dbReference type="InterPro" id="IPR009001">
    <property type="entry name" value="Transl_elong_EF1A/Init_IF2_C"/>
</dbReference>
<dbReference type="InterPro" id="IPR004541">
    <property type="entry name" value="Transl_elong_EFTu/EF1A_bac/org"/>
</dbReference>
<dbReference type="InterPro" id="IPR004160">
    <property type="entry name" value="Transl_elong_EFTu/EF1A_C"/>
</dbReference>
<dbReference type="NCBIfam" id="TIGR00485">
    <property type="entry name" value="EF-Tu"/>
    <property type="match status" value="1"/>
</dbReference>
<dbReference type="NCBIfam" id="NF000766">
    <property type="entry name" value="PRK00049.1"/>
    <property type="match status" value="1"/>
</dbReference>
<dbReference type="NCBIfam" id="NF009372">
    <property type="entry name" value="PRK12735.1"/>
    <property type="match status" value="1"/>
</dbReference>
<dbReference type="NCBIfam" id="NF009373">
    <property type="entry name" value="PRK12736.1"/>
    <property type="match status" value="1"/>
</dbReference>
<dbReference type="NCBIfam" id="TIGR00231">
    <property type="entry name" value="small_GTP"/>
    <property type="match status" value="1"/>
</dbReference>
<dbReference type="PANTHER" id="PTHR43721:SF22">
    <property type="entry name" value="ELONGATION FACTOR TU, MITOCHONDRIAL"/>
    <property type="match status" value="1"/>
</dbReference>
<dbReference type="PANTHER" id="PTHR43721">
    <property type="entry name" value="ELONGATION FACTOR TU-RELATED"/>
    <property type="match status" value="1"/>
</dbReference>
<dbReference type="Pfam" id="PF00009">
    <property type="entry name" value="GTP_EFTU"/>
    <property type="match status" value="1"/>
</dbReference>
<dbReference type="Pfam" id="PF03144">
    <property type="entry name" value="GTP_EFTU_D2"/>
    <property type="match status" value="1"/>
</dbReference>
<dbReference type="Pfam" id="PF03143">
    <property type="entry name" value="GTP_EFTU_D3"/>
    <property type="match status" value="1"/>
</dbReference>
<dbReference type="PRINTS" id="PR00315">
    <property type="entry name" value="ELONGATNFCT"/>
</dbReference>
<dbReference type="SUPFAM" id="SSF50465">
    <property type="entry name" value="EF-Tu/eEF-1alpha/eIF2-gamma C-terminal domain"/>
    <property type="match status" value="1"/>
</dbReference>
<dbReference type="SUPFAM" id="SSF52540">
    <property type="entry name" value="P-loop containing nucleoside triphosphate hydrolases"/>
    <property type="match status" value="1"/>
</dbReference>
<dbReference type="SUPFAM" id="SSF50447">
    <property type="entry name" value="Translation proteins"/>
    <property type="match status" value="1"/>
</dbReference>
<dbReference type="PROSITE" id="PS00301">
    <property type="entry name" value="G_TR_1"/>
    <property type="match status" value="1"/>
</dbReference>
<dbReference type="PROSITE" id="PS51722">
    <property type="entry name" value="G_TR_2"/>
    <property type="match status" value="1"/>
</dbReference>
<proteinExistence type="inferred from homology"/>
<organism>
    <name type="scientific">Clostridium botulinum (strain Hall / ATCC 3502 / NCTC 13319 / Type A)</name>
    <dbReference type="NCBI Taxonomy" id="441771"/>
    <lineage>
        <taxon>Bacteria</taxon>
        <taxon>Bacillati</taxon>
        <taxon>Bacillota</taxon>
        <taxon>Clostridia</taxon>
        <taxon>Eubacteriales</taxon>
        <taxon>Clostridiaceae</taxon>
        <taxon>Clostridium</taxon>
    </lineage>
</organism>
<protein>
    <recommendedName>
        <fullName evidence="2">Elongation factor Tu</fullName>
        <shortName evidence="2">EF-Tu</shortName>
        <ecNumber evidence="2">3.6.5.3</ecNumber>
    </recommendedName>
</protein>